<geneLocation type="chloroplast"/>
<proteinExistence type="inferred from homology"/>
<evidence type="ECO:0000255" key="1">
    <source>
        <dbReference type="HAMAP-Rule" id="MF_01317"/>
    </source>
</evidence>
<comment type="function">
    <text evidence="1">One of the components of the core complex of photosystem II (PSII). PSII is a light-driven water:plastoquinone oxidoreductase that uses light energy to abstract electrons from H(2)O, generating O(2) and a proton gradient subsequently used for ATP formation. It consists of a core antenna complex that captures photons, and an electron transfer chain that converts photonic excitation into a charge separation. This subunit is found at the monomer-monomer interface and is required for correct PSII assembly and/or dimerization.</text>
</comment>
<comment type="subunit">
    <text evidence="1">PSII is composed of 1 copy each of membrane proteins PsbA, PsbB, PsbC, PsbD, PsbE, PsbF, PsbH, PsbI, PsbJ, PsbK, PsbL, PsbM, PsbT, PsbX, PsbY, PsbZ, Psb30/Ycf12, at least 3 peripheral proteins of the oxygen-evolving complex and a large number of cofactors. It forms dimeric complexes.</text>
</comment>
<comment type="subcellular location">
    <subcellularLocation>
        <location evidence="1">Plastid</location>
        <location evidence="1">Chloroplast thylakoid membrane</location>
        <topology evidence="1">Single-pass membrane protein</topology>
    </subcellularLocation>
</comment>
<comment type="similarity">
    <text evidence="1">Belongs to the PsbL family.</text>
</comment>
<feature type="chain" id="PRO_0000353262" description="Photosystem II reaction center protein L">
    <location>
        <begin position="1"/>
        <end position="38"/>
    </location>
</feature>
<feature type="transmembrane region" description="Helical" evidence="1">
    <location>
        <begin position="17"/>
        <end position="37"/>
    </location>
</feature>
<gene>
    <name evidence="1" type="primary">psbL</name>
</gene>
<sequence>MTQSNPNEQNVELNRTSLYWGLLLIFVLAVLFSNYFFN</sequence>
<protein>
    <recommendedName>
        <fullName evidence="1">Photosystem II reaction center protein L</fullName>
        <shortName evidence="1">PSII-L</shortName>
    </recommendedName>
</protein>
<organism>
    <name type="scientific">Manihot esculenta</name>
    <name type="common">Cassava</name>
    <name type="synonym">Jatropha manihot</name>
    <dbReference type="NCBI Taxonomy" id="3983"/>
    <lineage>
        <taxon>Eukaryota</taxon>
        <taxon>Viridiplantae</taxon>
        <taxon>Streptophyta</taxon>
        <taxon>Embryophyta</taxon>
        <taxon>Tracheophyta</taxon>
        <taxon>Spermatophyta</taxon>
        <taxon>Magnoliopsida</taxon>
        <taxon>eudicotyledons</taxon>
        <taxon>Gunneridae</taxon>
        <taxon>Pentapetalae</taxon>
        <taxon>rosids</taxon>
        <taxon>fabids</taxon>
        <taxon>Malpighiales</taxon>
        <taxon>Euphorbiaceae</taxon>
        <taxon>Crotonoideae</taxon>
        <taxon>Manihoteae</taxon>
        <taxon>Manihot</taxon>
    </lineage>
</organism>
<dbReference type="EMBL" id="EU117376">
    <property type="protein sequence ID" value="ABV66169.1"/>
    <property type="molecule type" value="Genomic_DNA"/>
</dbReference>
<dbReference type="RefSeq" id="YP_001718452.1">
    <property type="nucleotide sequence ID" value="NC_010433.1"/>
</dbReference>
<dbReference type="SMR" id="B1NWG5"/>
<dbReference type="GeneID" id="6000067"/>
<dbReference type="KEGG" id="mesc:6000067"/>
<dbReference type="OrthoDB" id="99at2759"/>
<dbReference type="GO" id="GO:0009535">
    <property type="term" value="C:chloroplast thylakoid membrane"/>
    <property type="evidence" value="ECO:0007669"/>
    <property type="project" value="UniProtKB-SubCell"/>
</dbReference>
<dbReference type="GO" id="GO:0009539">
    <property type="term" value="C:photosystem II reaction center"/>
    <property type="evidence" value="ECO:0007669"/>
    <property type="project" value="InterPro"/>
</dbReference>
<dbReference type="GO" id="GO:0015979">
    <property type="term" value="P:photosynthesis"/>
    <property type="evidence" value="ECO:0007669"/>
    <property type="project" value="UniProtKB-UniRule"/>
</dbReference>
<dbReference type="HAMAP" id="MF_01317">
    <property type="entry name" value="PSII_PsbL"/>
    <property type="match status" value="1"/>
</dbReference>
<dbReference type="InterPro" id="IPR003372">
    <property type="entry name" value="PSII_PsbL"/>
</dbReference>
<dbReference type="InterPro" id="IPR037266">
    <property type="entry name" value="PSII_PsbL_sf"/>
</dbReference>
<dbReference type="NCBIfam" id="NF001972">
    <property type="entry name" value="PRK00753.1"/>
    <property type="match status" value="1"/>
</dbReference>
<dbReference type="Pfam" id="PF02419">
    <property type="entry name" value="PsbL"/>
    <property type="match status" value="1"/>
</dbReference>
<dbReference type="SUPFAM" id="SSF161017">
    <property type="entry name" value="Photosystem II reaction center protein L, PsbL"/>
    <property type="match status" value="1"/>
</dbReference>
<reference key="1">
    <citation type="journal article" date="2008" name="Theor. Appl. Genet.">
        <title>The complete nucleotide sequence of the cassava (Manihot esculenta) chloroplast genome and the evolution of atpF in Malpighiales: RNA editing and multiple losses of a group II intron.</title>
        <authorList>
            <person name="Daniell H."/>
            <person name="Wurdack K.J."/>
            <person name="Kanagaraj A."/>
            <person name="Lee S.-B."/>
            <person name="Saski C."/>
            <person name="Jansen R.K."/>
        </authorList>
    </citation>
    <scope>NUCLEOTIDE SEQUENCE [LARGE SCALE GENOMIC DNA]</scope>
    <source>
        <strain>cv. TME3</strain>
    </source>
</reference>
<name>PSBL_MANES</name>
<accession>B1NWG5</accession>
<keyword id="KW-0150">Chloroplast</keyword>
<keyword id="KW-0472">Membrane</keyword>
<keyword id="KW-0602">Photosynthesis</keyword>
<keyword id="KW-0604">Photosystem II</keyword>
<keyword id="KW-0934">Plastid</keyword>
<keyword id="KW-0674">Reaction center</keyword>
<keyword id="KW-0793">Thylakoid</keyword>
<keyword id="KW-0812">Transmembrane</keyword>
<keyword id="KW-1133">Transmembrane helix</keyword>